<organism>
    <name type="scientific">Staphylococcus aureus (strain Mu3 / ATCC 700698)</name>
    <dbReference type="NCBI Taxonomy" id="418127"/>
    <lineage>
        <taxon>Bacteria</taxon>
        <taxon>Bacillati</taxon>
        <taxon>Bacillota</taxon>
        <taxon>Bacilli</taxon>
        <taxon>Bacillales</taxon>
        <taxon>Staphylococcaceae</taxon>
        <taxon>Staphylococcus</taxon>
    </lineage>
</organism>
<evidence type="ECO:0000255" key="1">
    <source>
        <dbReference type="HAMAP-Rule" id="MF_00406"/>
    </source>
</evidence>
<comment type="function">
    <text evidence="1">Involved in unsaturated fatty acids biosynthesis. Catalyzes the dehydration of short chain beta-hydroxyacyl-ACPs and long chain saturated and unsaturated beta-hydroxyacyl-ACPs.</text>
</comment>
<comment type="catalytic activity">
    <reaction evidence="1">
        <text>a (3R)-hydroxyacyl-[ACP] = a (2E)-enoyl-[ACP] + H2O</text>
        <dbReference type="Rhea" id="RHEA:13097"/>
        <dbReference type="Rhea" id="RHEA-COMP:9925"/>
        <dbReference type="Rhea" id="RHEA-COMP:9945"/>
        <dbReference type="ChEBI" id="CHEBI:15377"/>
        <dbReference type="ChEBI" id="CHEBI:78784"/>
        <dbReference type="ChEBI" id="CHEBI:78827"/>
        <dbReference type="EC" id="4.2.1.59"/>
    </reaction>
</comment>
<comment type="subcellular location">
    <subcellularLocation>
        <location evidence="1">Cytoplasm</location>
    </subcellularLocation>
</comment>
<comment type="similarity">
    <text evidence="1">Belongs to the thioester dehydratase family. FabZ subfamily.</text>
</comment>
<accession>A7X4T7</accession>
<reference key="1">
    <citation type="journal article" date="2008" name="Antimicrob. Agents Chemother.">
        <title>Mutated response regulator graR is responsible for phenotypic conversion of Staphylococcus aureus from heterogeneous vancomycin-intermediate resistance to vancomycin-intermediate resistance.</title>
        <authorList>
            <person name="Neoh H.-M."/>
            <person name="Cui L."/>
            <person name="Yuzawa H."/>
            <person name="Takeuchi F."/>
            <person name="Matsuo M."/>
            <person name="Hiramatsu K."/>
        </authorList>
    </citation>
    <scope>NUCLEOTIDE SEQUENCE [LARGE SCALE GENOMIC DNA]</scope>
    <source>
        <strain>Mu3 / ATCC 700698</strain>
    </source>
</reference>
<gene>
    <name evidence="1" type="primary">fabZ</name>
    <name type="ordered locus">SAHV_2083</name>
</gene>
<name>FABZ_STAA1</name>
<feature type="chain" id="PRO_1000049863" description="3-hydroxyacyl-[acyl-carrier-protein] dehydratase FabZ">
    <location>
        <begin position="1"/>
        <end position="146"/>
    </location>
</feature>
<feature type="active site" evidence="1">
    <location>
        <position position="51"/>
    </location>
</feature>
<sequence>METIFDYNQIKQIIPHRQPFLLIDKVVEYEEGQRCVAIKQVSGNEPFFQGHFPEYAVMPGVLITEALAQTGAVAILNSEENKGKIALFAGIDKCRFKRQVVPGDTLTLEVEITKIKGPIGKGNAKATVDGQLACSCELTFAIQDVK</sequence>
<dbReference type="EC" id="4.2.1.59" evidence="1"/>
<dbReference type="EMBL" id="AP009324">
    <property type="protein sequence ID" value="BAF78966.1"/>
    <property type="molecule type" value="Genomic_DNA"/>
</dbReference>
<dbReference type="RefSeq" id="WP_000447678.1">
    <property type="nucleotide sequence ID" value="NZ_CTYB01000015.1"/>
</dbReference>
<dbReference type="SMR" id="A7X4T7"/>
<dbReference type="KEGG" id="saw:SAHV_2083"/>
<dbReference type="HOGENOM" id="CLU_078912_3_0_9"/>
<dbReference type="GO" id="GO:0005737">
    <property type="term" value="C:cytoplasm"/>
    <property type="evidence" value="ECO:0007669"/>
    <property type="project" value="UniProtKB-SubCell"/>
</dbReference>
<dbReference type="GO" id="GO:0016020">
    <property type="term" value="C:membrane"/>
    <property type="evidence" value="ECO:0007669"/>
    <property type="project" value="GOC"/>
</dbReference>
<dbReference type="GO" id="GO:0019171">
    <property type="term" value="F:(3R)-hydroxyacyl-[acyl-carrier-protein] dehydratase activity"/>
    <property type="evidence" value="ECO:0007669"/>
    <property type="project" value="UniProtKB-EC"/>
</dbReference>
<dbReference type="GO" id="GO:0006633">
    <property type="term" value="P:fatty acid biosynthetic process"/>
    <property type="evidence" value="ECO:0007669"/>
    <property type="project" value="UniProtKB-UniRule"/>
</dbReference>
<dbReference type="GO" id="GO:0009245">
    <property type="term" value="P:lipid A biosynthetic process"/>
    <property type="evidence" value="ECO:0007669"/>
    <property type="project" value="UniProtKB-UniRule"/>
</dbReference>
<dbReference type="CDD" id="cd01288">
    <property type="entry name" value="FabZ"/>
    <property type="match status" value="1"/>
</dbReference>
<dbReference type="FunFam" id="3.10.129.10:FF:000001">
    <property type="entry name" value="3-hydroxyacyl-[acyl-carrier-protein] dehydratase FabZ"/>
    <property type="match status" value="1"/>
</dbReference>
<dbReference type="Gene3D" id="3.10.129.10">
    <property type="entry name" value="Hotdog Thioesterase"/>
    <property type="match status" value="1"/>
</dbReference>
<dbReference type="HAMAP" id="MF_00406">
    <property type="entry name" value="FabZ"/>
    <property type="match status" value="1"/>
</dbReference>
<dbReference type="InterPro" id="IPR013114">
    <property type="entry name" value="FabA_FabZ"/>
</dbReference>
<dbReference type="InterPro" id="IPR010084">
    <property type="entry name" value="FabZ"/>
</dbReference>
<dbReference type="InterPro" id="IPR029069">
    <property type="entry name" value="HotDog_dom_sf"/>
</dbReference>
<dbReference type="NCBIfam" id="TIGR01750">
    <property type="entry name" value="fabZ"/>
    <property type="match status" value="1"/>
</dbReference>
<dbReference type="NCBIfam" id="NF000582">
    <property type="entry name" value="PRK00006.1"/>
    <property type="match status" value="1"/>
</dbReference>
<dbReference type="PANTHER" id="PTHR30272">
    <property type="entry name" value="3-HYDROXYACYL-[ACYL-CARRIER-PROTEIN] DEHYDRATASE"/>
    <property type="match status" value="1"/>
</dbReference>
<dbReference type="PANTHER" id="PTHR30272:SF1">
    <property type="entry name" value="3-HYDROXYACYL-[ACYL-CARRIER-PROTEIN] DEHYDRATASE"/>
    <property type="match status" value="1"/>
</dbReference>
<dbReference type="Pfam" id="PF07977">
    <property type="entry name" value="FabA"/>
    <property type="match status" value="1"/>
</dbReference>
<dbReference type="SUPFAM" id="SSF54637">
    <property type="entry name" value="Thioesterase/thiol ester dehydrase-isomerase"/>
    <property type="match status" value="1"/>
</dbReference>
<protein>
    <recommendedName>
        <fullName evidence="1">3-hydroxyacyl-[acyl-carrier-protein] dehydratase FabZ</fullName>
        <ecNumber evidence="1">4.2.1.59</ecNumber>
    </recommendedName>
    <alternativeName>
        <fullName evidence="1">(3R)-hydroxymyristoyl-[acyl-carrier-protein] dehydratase</fullName>
        <shortName evidence="1">(3R)-hydroxymyristoyl-ACP dehydrase</shortName>
    </alternativeName>
    <alternativeName>
        <fullName evidence="1">Beta-hydroxyacyl-ACP dehydratase</fullName>
    </alternativeName>
</protein>
<proteinExistence type="inferred from homology"/>
<keyword id="KW-0963">Cytoplasm</keyword>
<keyword id="KW-0441">Lipid A biosynthesis</keyword>
<keyword id="KW-0444">Lipid biosynthesis</keyword>
<keyword id="KW-0443">Lipid metabolism</keyword>
<keyword id="KW-0456">Lyase</keyword>